<protein>
    <recommendedName>
        <fullName evidence="1">Large ribosomal subunit protein uL11</fullName>
    </recommendedName>
    <alternativeName>
        <fullName evidence="2">50S ribosomal protein L11</fullName>
    </alternativeName>
</protein>
<name>RL11_ROSCS</name>
<feature type="chain" id="PRO_1000083399" description="Large ribosomal subunit protein uL11">
    <location>
        <begin position="1"/>
        <end position="141"/>
    </location>
</feature>
<dbReference type="EMBL" id="CP000804">
    <property type="protein sequence ID" value="ABU60344.1"/>
    <property type="molecule type" value="Genomic_DNA"/>
</dbReference>
<dbReference type="RefSeq" id="WP_012122765.1">
    <property type="nucleotide sequence ID" value="NC_009767.1"/>
</dbReference>
<dbReference type="SMR" id="A7NRZ8"/>
<dbReference type="STRING" id="383372.Rcas_4320"/>
<dbReference type="KEGG" id="rca:Rcas_4320"/>
<dbReference type="eggNOG" id="COG0080">
    <property type="taxonomic scope" value="Bacteria"/>
</dbReference>
<dbReference type="HOGENOM" id="CLU_074237_2_2_0"/>
<dbReference type="OrthoDB" id="9802408at2"/>
<dbReference type="Proteomes" id="UP000000263">
    <property type="component" value="Chromosome"/>
</dbReference>
<dbReference type="GO" id="GO:0022625">
    <property type="term" value="C:cytosolic large ribosomal subunit"/>
    <property type="evidence" value="ECO:0007669"/>
    <property type="project" value="TreeGrafter"/>
</dbReference>
<dbReference type="GO" id="GO:0070180">
    <property type="term" value="F:large ribosomal subunit rRNA binding"/>
    <property type="evidence" value="ECO:0007669"/>
    <property type="project" value="UniProtKB-UniRule"/>
</dbReference>
<dbReference type="GO" id="GO:0003735">
    <property type="term" value="F:structural constituent of ribosome"/>
    <property type="evidence" value="ECO:0007669"/>
    <property type="project" value="InterPro"/>
</dbReference>
<dbReference type="GO" id="GO:0006412">
    <property type="term" value="P:translation"/>
    <property type="evidence" value="ECO:0007669"/>
    <property type="project" value="UniProtKB-UniRule"/>
</dbReference>
<dbReference type="CDD" id="cd00349">
    <property type="entry name" value="Ribosomal_L11"/>
    <property type="match status" value="1"/>
</dbReference>
<dbReference type="FunFam" id="1.10.10.250:FF:000001">
    <property type="entry name" value="50S ribosomal protein L11"/>
    <property type="match status" value="1"/>
</dbReference>
<dbReference type="FunFam" id="3.30.1550.10:FF:000005">
    <property type="entry name" value="50S ribosomal protein L11"/>
    <property type="match status" value="1"/>
</dbReference>
<dbReference type="Gene3D" id="1.10.10.250">
    <property type="entry name" value="Ribosomal protein L11, C-terminal domain"/>
    <property type="match status" value="1"/>
</dbReference>
<dbReference type="Gene3D" id="3.30.1550.10">
    <property type="entry name" value="Ribosomal protein L11/L12, N-terminal domain"/>
    <property type="match status" value="1"/>
</dbReference>
<dbReference type="HAMAP" id="MF_00736">
    <property type="entry name" value="Ribosomal_uL11"/>
    <property type="match status" value="1"/>
</dbReference>
<dbReference type="InterPro" id="IPR000911">
    <property type="entry name" value="Ribosomal_uL11"/>
</dbReference>
<dbReference type="InterPro" id="IPR006519">
    <property type="entry name" value="Ribosomal_uL11_bac-typ"/>
</dbReference>
<dbReference type="InterPro" id="IPR020783">
    <property type="entry name" value="Ribosomal_uL11_C"/>
</dbReference>
<dbReference type="InterPro" id="IPR036769">
    <property type="entry name" value="Ribosomal_uL11_C_sf"/>
</dbReference>
<dbReference type="InterPro" id="IPR020785">
    <property type="entry name" value="Ribosomal_uL11_CS"/>
</dbReference>
<dbReference type="InterPro" id="IPR020784">
    <property type="entry name" value="Ribosomal_uL11_N"/>
</dbReference>
<dbReference type="InterPro" id="IPR036796">
    <property type="entry name" value="Ribosomal_uL11_N_sf"/>
</dbReference>
<dbReference type="NCBIfam" id="TIGR01632">
    <property type="entry name" value="L11_bact"/>
    <property type="match status" value="1"/>
</dbReference>
<dbReference type="PANTHER" id="PTHR11661">
    <property type="entry name" value="60S RIBOSOMAL PROTEIN L12"/>
    <property type="match status" value="1"/>
</dbReference>
<dbReference type="PANTHER" id="PTHR11661:SF1">
    <property type="entry name" value="LARGE RIBOSOMAL SUBUNIT PROTEIN UL11M"/>
    <property type="match status" value="1"/>
</dbReference>
<dbReference type="Pfam" id="PF00298">
    <property type="entry name" value="Ribosomal_L11"/>
    <property type="match status" value="1"/>
</dbReference>
<dbReference type="Pfam" id="PF03946">
    <property type="entry name" value="Ribosomal_L11_N"/>
    <property type="match status" value="1"/>
</dbReference>
<dbReference type="SMART" id="SM00649">
    <property type="entry name" value="RL11"/>
    <property type="match status" value="1"/>
</dbReference>
<dbReference type="SUPFAM" id="SSF54747">
    <property type="entry name" value="Ribosomal L11/L12e N-terminal domain"/>
    <property type="match status" value="1"/>
</dbReference>
<dbReference type="SUPFAM" id="SSF46906">
    <property type="entry name" value="Ribosomal protein L11, C-terminal domain"/>
    <property type="match status" value="1"/>
</dbReference>
<dbReference type="PROSITE" id="PS00359">
    <property type="entry name" value="RIBOSOMAL_L11"/>
    <property type="match status" value="1"/>
</dbReference>
<reference key="1">
    <citation type="submission" date="2007-08" db="EMBL/GenBank/DDBJ databases">
        <title>Complete sequence of Roseiflexus castenholzii DSM 13941.</title>
        <authorList>
            <consortium name="US DOE Joint Genome Institute"/>
            <person name="Copeland A."/>
            <person name="Lucas S."/>
            <person name="Lapidus A."/>
            <person name="Barry K."/>
            <person name="Glavina del Rio T."/>
            <person name="Dalin E."/>
            <person name="Tice H."/>
            <person name="Pitluck S."/>
            <person name="Thompson L.S."/>
            <person name="Brettin T."/>
            <person name="Bruce D."/>
            <person name="Detter J.C."/>
            <person name="Han C."/>
            <person name="Tapia R."/>
            <person name="Schmutz J."/>
            <person name="Larimer F."/>
            <person name="Land M."/>
            <person name="Hauser L."/>
            <person name="Kyrpides N."/>
            <person name="Mikhailova N."/>
            <person name="Bryant D.A."/>
            <person name="Hanada S."/>
            <person name="Tsukatani Y."/>
            <person name="Richardson P."/>
        </authorList>
    </citation>
    <scope>NUCLEOTIDE SEQUENCE [LARGE SCALE GENOMIC DNA]</scope>
    <source>
        <strain>DSM 13941 / HLO8</strain>
    </source>
</reference>
<organism>
    <name type="scientific">Roseiflexus castenholzii (strain DSM 13941 / HLO8)</name>
    <dbReference type="NCBI Taxonomy" id="383372"/>
    <lineage>
        <taxon>Bacteria</taxon>
        <taxon>Bacillati</taxon>
        <taxon>Chloroflexota</taxon>
        <taxon>Chloroflexia</taxon>
        <taxon>Chloroflexales</taxon>
        <taxon>Roseiflexineae</taxon>
        <taxon>Roseiflexaceae</taxon>
        <taxon>Roseiflexus</taxon>
    </lineage>
</organism>
<sequence length="141" mass="14733">MAKKVTGVVKLQLPAGKATPAPPVGPALGGYGINIMAFVKEYNEKTASQAGSIIPVEVTIYSDRSFTITLKTPPAADLLRKAAGIEKGSGTPNRKIAGTITAKQLRQVAEQKMSDLNAQSIEAAEKIIAGTARSMGIKIVE</sequence>
<accession>A7NRZ8</accession>
<evidence type="ECO:0000255" key="1">
    <source>
        <dbReference type="HAMAP-Rule" id="MF_00736"/>
    </source>
</evidence>
<evidence type="ECO:0000305" key="2"/>
<comment type="function">
    <text evidence="1">Forms part of the ribosomal stalk which helps the ribosome interact with GTP-bound translation factors.</text>
</comment>
<comment type="subunit">
    <text evidence="1">Part of the ribosomal stalk of the 50S ribosomal subunit. Interacts with L10 and the large rRNA to form the base of the stalk. L10 forms an elongated spine to which L12 dimers bind in a sequential fashion forming a multimeric L10(L12)X complex.</text>
</comment>
<comment type="PTM">
    <text evidence="1">One or more lysine residues are methylated.</text>
</comment>
<comment type="similarity">
    <text evidence="1">Belongs to the universal ribosomal protein uL11 family.</text>
</comment>
<proteinExistence type="inferred from homology"/>
<gene>
    <name evidence="1" type="primary">rplK</name>
    <name type="ordered locus">Rcas_4320</name>
</gene>
<keyword id="KW-0488">Methylation</keyword>
<keyword id="KW-1185">Reference proteome</keyword>
<keyword id="KW-0687">Ribonucleoprotein</keyword>
<keyword id="KW-0689">Ribosomal protein</keyword>
<keyword id="KW-0694">RNA-binding</keyword>
<keyword id="KW-0699">rRNA-binding</keyword>